<keyword id="KW-0687">Ribonucleoprotein</keyword>
<keyword id="KW-0689">Ribosomal protein</keyword>
<keyword id="KW-0694">RNA-binding</keyword>
<keyword id="KW-0699">rRNA-binding</keyword>
<dbReference type="EMBL" id="CP001068">
    <property type="protein sequence ID" value="ACD28395.1"/>
    <property type="molecule type" value="Genomic_DNA"/>
</dbReference>
<dbReference type="SMR" id="B2UEJ5"/>
<dbReference type="STRING" id="402626.Rpic_3273"/>
<dbReference type="KEGG" id="rpi:Rpic_3273"/>
<dbReference type="eggNOG" id="COG0100">
    <property type="taxonomic scope" value="Bacteria"/>
</dbReference>
<dbReference type="HOGENOM" id="CLU_072439_5_0_4"/>
<dbReference type="GO" id="GO:1990904">
    <property type="term" value="C:ribonucleoprotein complex"/>
    <property type="evidence" value="ECO:0007669"/>
    <property type="project" value="UniProtKB-KW"/>
</dbReference>
<dbReference type="GO" id="GO:0005840">
    <property type="term" value="C:ribosome"/>
    <property type="evidence" value="ECO:0007669"/>
    <property type="project" value="UniProtKB-KW"/>
</dbReference>
<dbReference type="GO" id="GO:0019843">
    <property type="term" value="F:rRNA binding"/>
    <property type="evidence" value="ECO:0007669"/>
    <property type="project" value="UniProtKB-UniRule"/>
</dbReference>
<dbReference type="GO" id="GO:0003735">
    <property type="term" value="F:structural constituent of ribosome"/>
    <property type="evidence" value="ECO:0007669"/>
    <property type="project" value="InterPro"/>
</dbReference>
<dbReference type="GO" id="GO:0006412">
    <property type="term" value="P:translation"/>
    <property type="evidence" value="ECO:0007669"/>
    <property type="project" value="UniProtKB-UniRule"/>
</dbReference>
<dbReference type="FunFam" id="3.30.420.80:FF:000001">
    <property type="entry name" value="30S ribosomal protein S11"/>
    <property type="match status" value="1"/>
</dbReference>
<dbReference type="Gene3D" id="3.30.420.80">
    <property type="entry name" value="Ribosomal protein S11"/>
    <property type="match status" value="1"/>
</dbReference>
<dbReference type="HAMAP" id="MF_01310">
    <property type="entry name" value="Ribosomal_uS11"/>
    <property type="match status" value="1"/>
</dbReference>
<dbReference type="InterPro" id="IPR001971">
    <property type="entry name" value="Ribosomal_uS11"/>
</dbReference>
<dbReference type="InterPro" id="IPR019981">
    <property type="entry name" value="Ribosomal_uS11_bac-type"/>
</dbReference>
<dbReference type="InterPro" id="IPR018102">
    <property type="entry name" value="Ribosomal_uS11_CS"/>
</dbReference>
<dbReference type="InterPro" id="IPR036967">
    <property type="entry name" value="Ribosomal_uS11_sf"/>
</dbReference>
<dbReference type="NCBIfam" id="NF003698">
    <property type="entry name" value="PRK05309.1"/>
    <property type="match status" value="1"/>
</dbReference>
<dbReference type="NCBIfam" id="TIGR03632">
    <property type="entry name" value="uS11_bact"/>
    <property type="match status" value="1"/>
</dbReference>
<dbReference type="PANTHER" id="PTHR11759">
    <property type="entry name" value="40S RIBOSOMAL PROTEIN S14/30S RIBOSOMAL PROTEIN S11"/>
    <property type="match status" value="1"/>
</dbReference>
<dbReference type="Pfam" id="PF00411">
    <property type="entry name" value="Ribosomal_S11"/>
    <property type="match status" value="1"/>
</dbReference>
<dbReference type="PIRSF" id="PIRSF002131">
    <property type="entry name" value="Ribosomal_S11"/>
    <property type="match status" value="1"/>
</dbReference>
<dbReference type="SUPFAM" id="SSF53137">
    <property type="entry name" value="Translational machinery components"/>
    <property type="match status" value="1"/>
</dbReference>
<dbReference type="PROSITE" id="PS00054">
    <property type="entry name" value="RIBOSOMAL_S11"/>
    <property type="match status" value="1"/>
</dbReference>
<gene>
    <name evidence="1" type="primary">rpsK</name>
    <name type="ordered locus">Rpic_3273</name>
</gene>
<organism>
    <name type="scientific">Ralstonia pickettii (strain 12J)</name>
    <dbReference type="NCBI Taxonomy" id="402626"/>
    <lineage>
        <taxon>Bacteria</taxon>
        <taxon>Pseudomonadati</taxon>
        <taxon>Pseudomonadota</taxon>
        <taxon>Betaproteobacteria</taxon>
        <taxon>Burkholderiales</taxon>
        <taxon>Burkholderiaceae</taxon>
        <taxon>Ralstonia</taxon>
    </lineage>
</organism>
<proteinExistence type="inferred from homology"/>
<evidence type="ECO:0000255" key="1">
    <source>
        <dbReference type="HAMAP-Rule" id="MF_01310"/>
    </source>
</evidence>
<evidence type="ECO:0000305" key="2"/>
<feature type="chain" id="PRO_1000141129" description="Small ribosomal subunit protein uS11">
    <location>
        <begin position="1"/>
        <end position="133"/>
    </location>
</feature>
<accession>B2UEJ5</accession>
<comment type="function">
    <text evidence="1">Located on the platform of the 30S subunit, it bridges several disparate RNA helices of the 16S rRNA. Forms part of the Shine-Dalgarno cleft in the 70S ribosome.</text>
</comment>
<comment type="subunit">
    <text evidence="1">Part of the 30S ribosomal subunit. Interacts with proteins S7 and S18. Binds to IF-3.</text>
</comment>
<comment type="similarity">
    <text evidence="1">Belongs to the universal ribosomal protein uS11 family.</text>
</comment>
<protein>
    <recommendedName>
        <fullName evidence="1">Small ribosomal subunit protein uS11</fullName>
    </recommendedName>
    <alternativeName>
        <fullName evidence="2">30S ribosomal protein S11</fullName>
    </alternativeName>
</protein>
<sequence>MAKAANTAAQRARKKVRKNVADGIAHVHASFNNTIITITDRQGNALSWATSGGQGFKGSRKSTPFAAQVAAESAGRVAQDQGIKNLEVRIKGPGPGRESAVRALNNLGIKIQLIEDVTPVPHNGCRPPKRRRI</sequence>
<name>RS11_RALPJ</name>
<reference key="1">
    <citation type="submission" date="2008-05" db="EMBL/GenBank/DDBJ databases">
        <title>Complete sequence of chromosome 1 of Ralstonia pickettii 12J.</title>
        <authorList>
            <person name="Lucas S."/>
            <person name="Copeland A."/>
            <person name="Lapidus A."/>
            <person name="Glavina del Rio T."/>
            <person name="Dalin E."/>
            <person name="Tice H."/>
            <person name="Bruce D."/>
            <person name="Goodwin L."/>
            <person name="Pitluck S."/>
            <person name="Meincke L."/>
            <person name="Brettin T."/>
            <person name="Detter J.C."/>
            <person name="Han C."/>
            <person name="Kuske C.R."/>
            <person name="Schmutz J."/>
            <person name="Larimer F."/>
            <person name="Land M."/>
            <person name="Hauser L."/>
            <person name="Kyrpides N."/>
            <person name="Mikhailova N."/>
            <person name="Marsh T."/>
            <person name="Richardson P."/>
        </authorList>
    </citation>
    <scope>NUCLEOTIDE SEQUENCE [LARGE SCALE GENOMIC DNA]</scope>
    <source>
        <strain>12J</strain>
    </source>
</reference>